<organism>
    <name type="scientific">Rickettsia rickettsii (strain Sheila Smith)</name>
    <dbReference type="NCBI Taxonomy" id="392021"/>
    <lineage>
        <taxon>Bacteria</taxon>
        <taxon>Pseudomonadati</taxon>
        <taxon>Pseudomonadota</taxon>
        <taxon>Alphaproteobacteria</taxon>
        <taxon>Rickettsiales</taxon>
        <taxon>Rickettsiaceae</taxon>
        <taxon>Rickettsieae</taxon>
        <taxon>Rickettsia</taxon>
        <taxon>spotted fever group</taxon>
    </lineage>
</organism>
<protein>
    <recommendedName>
        <fullName evidence="1">Cytochrome c-type biogenesis protein CcmE</fullName>
    </recommendedName>
    <alternativeName>
        <fullName evidence="1">Cytochrome c maturation protein E</fullName>
    </alternativeName>
    <alternativeName>
        <fullName evidence="1">Heme chaperone CcmE</fullName>
    </alternativeName>
</protein>
<comment type="function">
    <text evidence="1">Heme chaperone required for the biogenesis of c-type cytochromes. Transiently binds heme delivered by CcmC and transfers the heme to apo-cytochromes in a process facilitated by CcmF and CcmH.</text>
</comment>
<comment type="subcellular location">
    <subcellularLocation>
        <location evidence="1">Cell inner membrane</location>
        <topology evidence="1">Single-pass type II membrane protein</topology>
        <orientation evidence="1">Periplasmic side</orientation>
    </subcellularLocation>
</comment>
<comment type="similarity">
    <text evidence="1">Belongs to the CcmE/CycJ family.</text>
</comment>
<proteinExistence type="inferred from homology"/>
<dbReference type="EMBL" id="CP000848">
    <property type="protein sequence ID" value="ABV76488.1"/>
    <property type="molecule type" value="Genomic_DNA"/>
</dbReference>
<dbReference type="RefSeq" id="WP_012151059.1">
    <property type="nucleotide sequence ID" value="NZ_CP121767.1"/>
</dbReference>
<dbReference type="SMR" id="A8GSW3"/>
<dbReference type="GeneID" id="79937579"/>
<dbReference type="KEGG" id="rri:A1G_04950"/>
<dbReference type="HOGENOM" id="CLU_079503_1_1_5"/>
<dbReference type="Proteomes" id="UP000006832">
    <property type="component" value="Chromosome"/>
</dbReference>
<dbReference type="GO" id="GO:0005886">
    <property type="term" value="C:plasma membrane"/>
    <property type="evidence" value="ECO:0007669"/>
    <property type="project" value="UniProtKB-SubCell"/>
</dbReference>
<dbReference type="GO" id="GO:0020037">
    <property type="term" value="F:heme binding"/>
    <property type="evidence" value="ECO:0007669"/>
    <property type="project" value="InterPro"/>
</dbReference>
<dbReference type="GO" id="GO:0046872">
    <property type="term" value="F:metal ion binding"/>
    <property type="evidence" value="ECO:0007669"/>
    <property type="project" value="UniProtKB-KW"/>
</dbReference>
<dbReference type="GO" id="GO:0017004">
    <property type="term" value="P:cytochrome complex assembly"/>
    <property type="evidence" value="ECO:0007669"/>
    <property type="project" value="UniProtKB-KW"/>
</dbReference>
<dbReference type="Gene3D" id="2.40.50.140">
    <property type="entry name" value="Nucleic acid-binding proteins"/>
    <property type="match status" value="1"/>
</dbReference>
<dbReference type="HAMAP" id="MF_01959">
    <property type="entry name" value="CcmE"/>
    <property type="match status" value="1"/>
</dbReference>
<dbReference type="InterPro" id="IPR004329">
    <property type="entry name" value="CcmE"/>
</dbReference>
<dbReference type="InterPro" id="IPR036127">
    <property type="entry name" value="CcmE-like_sf"/>
</dbReference>
<dbReference type="InterPro" id="IPR012340">
    <property type="entry name" value="NA-bd_OB-fold"/>
</dbReference>
<dbReference type="NCBIfam" id="NF009727">
    <property type="entry name" value="PRK13254.1-1"/>
    <property type="match status" value="1"/>
</dbReference>
<dbReference type="PANTHER" id="PTHR34128">
    <property type="entry name" value="CYTOCHROME C-TYPE BIOGENESIS PROTEIN CCME HOMOLOG, MITOCHONDRIAL"/>
    <property type="match status" value="1"/>
</dbReference>
<dbReference type="PANTHER" id="PTHR34128:SF2">
    <property type="entry name" value="CYTOCHROME C-TYPE BIOGENESIS PROTEIN CCME HOMOLOG, MITOCHONDRIAL"/>
    <property type="match status" value="1"/>
</dbReference>
<dbReference type="Pfam" id="PF03100">
    <property type="entry name" value="CcmE"/>
    <property type="match status" value="1"/>
</dbReference>
<dbReference type="SUPFAM" id="SSF82093">
    <property type="entry name" value="Heme chaperone CcmE"/>
    <property type="match status" value="1"/>
</dbReference>
<feature type="chain" id="PRO_1000070846" description="Cytochrome c-type biogenesis protein CcmE">
    <location>
        <begin position="1"/>
        <end position="128"/>
    </location>
</feature>
<feature type="topological domain" description="Cytoplasmic" evidence="1">
    <location>
        <begin position="1"/>
        <end position="8"/>
    </location>
</feature>
<feature type="transmembrane region" description="Helical; Signal-anchor for type II membrane protein" evidence="1">
    <location>
        <begin position="9"/>
        <end position="29"/>
    </location>
</feature>
<feature type="topological domain" description="Periplasmic" evidence="1">
    <location>
        <begin position="30"/>
        <end position="128"/>
    </location>
</feature>
<feature type="binding site" description="covalent" evidence="1">
    <location>
        <position position="120"/>
    </location>
    <ligand>
        <name>heme</name>
        <dbReference type="ChEBI" id="CHEBI:30413"/>
    </ligand>
</feature>
<feature type="binding site" description="axial binding residue" evidence="1">
    <location>
        <position position="124"/>
    </location>
    <ligand>
        <name>heme</name>
        <dbReference type="ChEBI" id="CHEBI:30413"/>
    </ligand>
    <ligandPart>
        <name>Fe</name>
        <dbReference type="ChEBI" id="CHEBI:18248"/>
    </ligandPart>
</feature>
<evidence type="ECO:0000255" key="1">
    <source>
        <dbReference type="HAMAP-Rule" id="MF_01959"/>
    </source>
</evidence>
<accession>A8GSW3</accession>
<keyword id="KW-0997">Cell inner membrane</keyword>
<keyword id="KW-1003">Cell membrane</keyword>
<keyword id="KW-0201">Cytochrome c-type biogenesis</keyword>
<keyword id="KW-0349">Heme</keyword>
<keyword id="KW-0408">Iron</keyword>
<keyword id="KW-0472">Membrane</keyword>
<keyword id="KW-0479">Metal-binding</keyword>
<keyword id="KW-0735">Signal-anchor</keyword>
<keyword id="KW-0812">Transmembrane</keyword>
<keyword id="KW-1133">Transmembrane helix</keyword>
<name>CCME_RICRS</name>
<gene>
    <name evidence="1" type="primary">ccmE</name>
    <name evidence="1" type="synonym">cycJ</name>
    <name type="ordered locus">A1G_04950</name>
</gene>
<reference key="1">
    <citation type="submission" date="2007-09" db="EMBL/GenBank/DDBJ databases">
        <title>Complete genome sequence of Rickettsia rickettsii.</title>
        <authorList>
            <person name="Madan A."/>
            <person name="Fahey J."/>
            <person name="Helton E."/>
            <person name="Ketteman M."/>
            <person name="Madan A."/>
            <person name="Rodrigues S."/>
            <person name="Sanchez A."/>
            <person name="Dasch G."/>
            <person name="Eremeeva M."/>
        </authorList>
    </citation>
    <scope>NUCLEOTIDE SEQUENCE [LARGE SCALE GENOMIC DNA]</scope>
    <source>
        <strain>Sheila Smith</strain>
    </source>
</reference>
<sequence length="128" mass="14446">MQKRVRNRLITIIICFCSAFLGISIILYNLEKNIVFFLPPSKINEIEQGKELRVGGLVKTDSINKIADDKISFVITDNIKDCEILYQGALPALFRKGQGIIAIGQLSNGKFIARQLLAKHDENYRPPQ</sequence>